<name>NADD_NEIM0</name>
<proteinExistence type="inferred from homology"/>
<comment type="function">
    <text evidence="1">Catalyzes the reversible adenylation of nicotinate mononucleotide (NaMN) to nicotinic acid adenine dinucleotide (NaAD).</text>
</comment>
<comment type="catalytic activity">
    <reaction evidence="1">
        <text>nicotinate beta-D-ribonucleotide + ATP + H(+) = deamido-NAD(+) + diphosphate</text>
        <dbReference type="Rhea" id="RHEA:22860"/>
        <dbReference type="ChEBI" id="CHEBI:15378"/>
        <dbReference type="ChEBI" id="CHEBI:30616"/>
        <dbReference type="ChEBI" id="CHEBI:33019"/>
        <dbReference type="ChEBI" id="CHEBI:57502"/>
        <dbReference type="ChEBI" id="CHEBI:58437"/>
        <dbReference type="EC" id="2.7.7.18"/>
    </reaction>
</comment>
<comment type="pathway">
    <text evidence="1">Cofactor biosynthesis; NAD(+) biosynthesis; deamido-NAD(+) from nicotinate D-ribonucleotide: step 1/1.</text>
</comment>
<comment type="similarity">
    <text evidence="1">Belongs to the NadD family.</text>
</comment>
<dbReference type="EC" id="2.7.7.18" evidence="1"/>
<dbReference type="EMBL" id="CP000381">
    <property type="protein sequence ID" value="ABX72391.1"/>
    <property type="molecule type" value="Genomic_DNA"/>
</dbReference>
<dbReference type="RefSeq" id="WP_012221173.1">
    <property type="nucleotide sequence ID" value="NC_010120.1"/>
</dbReference>
<dbReference type="SMR" id="A9M0D0"/>
<dbReference type="KEGG" id="nmn:NMCC_0175"/>
<dbReference type="HOGENOM" id="CLU_069765_0_0_4"/>
<dbReference type="UniPathway" id="UPA00253">
    <property type="reaction ID" value="UER00332"/>
</dbReference>
<dbReference type="Proteomes" id="UP000001177">
    <property type="component" value="Chromosome"/>
</dbReference>
<dbReference type="GO" id="GO:0005524">
    <property type="term" value="F:ATP binding"/>
    <property type="evidence" value="ECO:0007669"/>
    <property type="project" value="UniProtKB-KW"/>
</dbReference>
<dbReference type="GO" id="GO:0004515">
    <property type="term" value="F:nicotinate-nucleotide adenylyltransferase activity"/>
    <property type="evidence" value="ECO:0007669"/>
    <property type="project" value="UniProtKB-UniRule"/>
</dbReference>
<dbReference type="GO" id="GO:0009435">
    <property type="term" value="P:NAD biosynthetic process"/>
    <property type="evidence" value="ECO:0007669"/>
    <property type="project" value="UniProtKB-UniRule"/>
</dbReference>
<dbReference type="CDD" id="cd02165">
    <property type="entry name" value="NMNAT"/>
    <property type="match status" value="1"/>
</dbReference>
<dbReference type="Gene3D" id="3.40.50.620">
    <property type="entry name" value="HUPs"/>
    <property type="match status" value="1"/>
</dbReference>
<dbReference type="HAMAP" id="MF_00244">
    <property type="entry name" value="NaMN_adenylyltr"/>
    <property type="match status" value="1"/>
</dbReference>
<dbReference type="InterPro" id="IPR004821">
    <property type="entry name" value="Cyt_trans-like"/>
</dbReference>
<dbReference type="InterPro" id="IPR005248">
    <property type="entry name" value="NadD/NMNAT"/>
</dbReference>
<dbReference type="InterPro" id="IPR014729">
    <property type="entry name" value="Rossmann-like_a/b/a_fold"/>
</dbReference>
<dbReference type="NCBIfam" id="TIGR00125">
    <property type="entry name" value="cyt_tran_rel"/>
    <property type="match status" value="1"/>
</dbReference>
<dbReference type="NCBIfam" id="TIGR00482">
    <property type="entry name" value="nicotinate (nicotinamide) nucleotide adenylyltransferase"/>
    <property type="match status" value="1"/>
</dbReference>
<dbReference type="NCBIfam" id="NF000840">
    <property type="entry name" value="PRK00071.1-3"/>
    <property type="match status" value="1"/>
</dbReference>
<dbReference type="PANTHER" id="PTHR39321">
    <property type="entry name" value="NICOTINATE-NUCLEOTIDE ADENYLYLTRANSFERASE-RELATED"/>
    <property type="match status" value="1"/>
</dbReference>
<dbReference type="PANTHER" id="PTHR39321:SF3">
    <property type="entry name" value="PHOSPHOPANTETHEINE ADENYLYLTRANSFERASE"/>
    <property type="match status" value="1"/>
</dbReference>
<dbReference type="Pfam" id="PF01467">
    <property type="entry name" value="CTP_transf_like"/>
    <property type="match status" value="1"/>
</dbReference>
<dbReference type="SUPFAM" id="SSF52374">
    <property type="entry name" value="Nucleotidylyl transferase"/>
    <property type="match status" value="1"/>
</dbReference>
<accession>A9M0D0</accession>
<protein>
    <recommendedName>
        <fullName evidence="1">Probable nicotinate-nucleotide adenylyltransferase</fullName>
        <ecNumber evidence="1">2.7.7.18</ecNumber>
    </recommendedName>
    <alternativeName>
        <fullName evidence="1">Deamido-NAD(+) diphosphorylase</fullName>
    </alternativeName>
    <alternativeName>
        <fullName evidence="1">Deamido-NAD(+) pyrophosphorylase</fullName>
    </alternativeName>
    <alternativeName>
        <fullName evidence="1">Nicotinate mononucleotide adenylyltransferase</fullName>
        <shortName evidence="1">NaMN adenylyltransferase</shortName>
    </alternativeName>
</protein>
<evidence type="ECO:0000255" key="1">
    <source>
        <dbReference type="HAMAP-Rule" id="MF_00244"/>
    </source>
</evidence>
<gene>
    <name evidence="1" type="primary">nadD</name>
    <name type="ordered locus">NMCC_0175</name>
</gene>
<feature type="chain" id="PRO_1000078386" description="Probable nicotinate-nucleotide adenylyltransferase">
    <location>
        <begin position="1"/>
        <end position="197"/>
    </location>
</feature>
<sequence length="197" mass="21783">MKKIGLFGGTFDPIHNGHLHIARAFADEIGLDAVVFLPAGGPYHKDAASASAADRLAMVELATAEDARFAVSDCDIVREGATYTFDTVQIFRQQFPSAQLWWLMGSDSLMKLHTWKKWQMLVRETNIAVAMRQGDSLHQTPRELHAWLGNALQDGSIRILSAPMHNASSTEIRRAGVSDGIPPAAARYIREHGLYEK</sequence>
<reference key="1">
    <citation type="journal article" date="2008" name="Genomics">
        <title>Characterization of ST-4821 complex, a unique Neisseria meningitidis clone.</title>
        <authorList>
            <person name="Peng J."/>
            <person name="Yang L."/>
            <person name="Yang F."/>
            <person name="Yang J."/>
            <person name="Yan Y."/>
            <person name="Nie H."/>
            <person name="Zhang X."/>
            <person name="Xiong Z."/>
            <person name="Jiang Y."/>
            <person name="Cheng F."/>
            <person name="Xu X."/>
            <person name="Chen S."/>
            <person name="Sun L."/>
            <person name="Li W."/>
            <person name="Shen Y."/>
            <person name="Shao Z."/>
            <person name="Liang X."/>
            <person name="Xu J."/>
            <person name="Jin Q."/>
        </authorList>
    </citation>
    <scope>NUCLEOTIDE SEQUENCE [LARGE SCALE GENOMIC DNA]</scope>
    <source>
        <strain>053442</strain>
    </source>
</reference>
<organism>
    <name type="scientific">Neisseria meningitidis serogroup C (strain 053442)</name>
    <dbReference type="NCBI Taxonomy" id="374833"/>
    <lineage>
        <taxon>Bacteria</taxon>
        <taxon>Pseudomonadati</taxon>
        <taxon>Pseudomonadota</taxon>
        <taxon>Betaproteobacteria</taxon>
        <taxon>Neisseriales</taxon>
        <taxon>Neisseriaceae</taxon>
        <taxon>Neisseria</taxon>
    </lineage>
</organism>
<keyword id="KW-0067">ATP-binding</keyword>
<keyword id="KW-0520">NAD</keyword>
<keyword id="KW-0547">Nucleotide-binding</keyword>
<keyword id="KW-0548">Nucleotidyltransferase</keyword>
<keyword id="KW-0662">Pyridine nucleotide biosynthesis</keyword>
<keyword id="KW-0808">Transferase</keyword>